<organism>
    <name type="scientific">Rhodococcus erythropolis (strain PR4 / NBRC 100887)</name>
    <dbReference type="NCBI Taxonomy" id="234621"/>
    <lineage>
        <taxon>Bacteria</taxon>
        <taxon>Bacillati</taxon>
        <taxon>Actinomycetota</taxon>
        <taxon>Actinomycetes</taxon>
        <taxon>Mycobacteriales</taxon>
        <taxon>Nocardiaceae</taxon>
        <taxon>Rhodococcus</taxon>
        <taxon>Rhodococcus erythropolis group</taxon>
    </lineage>
</organism>
<dbReference type="EMBL" id="AP008957">
    <property type="protein sequence ID" value="BAH33251.1"/>
    <property type="molecule type" value="Genomic_DNA"/>
</dbReference>
<dbReference type="RefSeq" id="WP_019747987.1">
    <property type="nucleotide sequence ID" value="NC_012490.1"/>
</dbReference>
<dbReference type="SMR" id="C0ZY16"/>
<dbReference type="GeneID" id="57487475"/>
<dbReference type="KEGG" id="rer:RER_25430"/>
<dbReference type="eggNOG" id="COG0264">
    <property type="taxonomic scope" value="Bacteria"/>
</dbReference>
<dbReference type="HOGENOM" id="CLU_047155_0_0_11"/>
<dbReference type="Proteomes" id="UP000002204">
    <property type="component" value="Chromosome"/>
</dbReference>
<dbReference type="GO" id="GO:0005737">
    <property type="term" value="C:cytoplasm"/>
    <property type="evidence" value="ECO:0007669"/>
    <property type="project" value="UniProtKB-SubCell"/>
</dbReference>
<dbReference type="GO" id="GO:0003746">
    <property type="term" value="F:translation elongation factor activity"/>
    <property type="evidence" value="ECO:0007669"/>
    <property type="project" value="UniProtKB-UniRule"/>
</dbReference>
<dbReference type="CDD" id="cd14275">
    <property type="entry name" value="UBA_EF-Ts"/>
    <property type="match status" value="1"/>
</dbReference>
<dbReference type="FunFam" id="1.10.286.20:FF:000001">
    <property type="entry name" value="Elongation factor Ts"/>
    <property type="match status" value="1"/>
</dbReference>
<dbReference type="FunFam" id="1.10.8.10:FF:000001">
    <property type="entry name" value="Elongation factor Ts"/>
    <property type="match status" value="1"/>
</dbReference>
<dbReference type="Gene3D" id="1.10.286.20">
    <property type="match status" value="1"/>
</dbReference>
<dbReference type="Gene3D" id="1.10.8.10">
    <property type="entry name" value="DNA helicase RuvA subunit, C-terminal domain"/>
    <property type="match status" value="1"/>
</dbReference>
<dbReference type="Gene3D" id="3.30.479.20">
    <property type="entry name" value="Elongation factor Ts, dimerisation domain"/>
    <property type="match status" value="2"/>
</dbReference>
<dbReference type="HAMAP" id="MF_00050">
    <property type="entry name" value="EF_Ts"/>
    <property type="match status" value="1"/>
</dbReference>
<dbReference type="InterPro" id="IPR036402">
    <property type="entry name" value="EF-Ts_dimer_sf"/>
</dbReference>
<dbReference type="InterPro" id="IPR001816">
    <property type="entry name" value="Transl_elong_EFTs/EF1B"/>
</dbReference>
<dbReference type="InterPro" id="IPR014039">
    <property type="entry name" value="Transl_elong_EFTs/EF1B_dimer"/>
</dbReference>
<dbReference type="InterPro" id="IPR018101">
    <property type="entry name" value="Transl_elong_Ts_CS"/>
</dbReference>
<dbReference type="InterPro" id="IPR009060">
    <property type="entry name" value="UBA-like_sf"/>
</dbReference>
<dbReference type="NCBIfam" id="TIGR00116">
    <property type="entry name" value="tsf"/>
    <property type="match status" value="1"/>
</dbReference>
<dbReference type="PANTHER" id="PTHR11741">
    <property type="entry name" value="ELONGATION FACTOR TS"/>
    <property type="match status" value="1"/>
</dbReference>
<dbReference type="PANTHER" id="PTHR11741:SF0">
    <property type="entry name" value="ELONGATION FACTOR TS, MITOCHONDRIAL"/>
    <property type="match status" value="1"/>
</dbReference>
<dbReference type="Pfam" id="PF00889">
    <property type="entry name" value="EF_TS"/>
    <property type="match status" value="1"/>
</dbReference>
<dbReference type="SUPFAM" id="SSF54713">
    <property type="entry name" value="Elongation factor Ts (EF-Ts), dimerisation domain"/>
    <property type="match status" value="2"/>
</dbReference>
<dbReference type="SUPFAM" id="SSF46934">
    <property type="entry name" value="UBA-like"/>
    <property type="match status" value="1"/>
</dbReference>
<dbReference type="PROSITE" id="PS01126">
    <property type="entry name" value="EF_TS_1"/>
    <property type="match status" value="1"/>
</dbReference>
<dbReference type="PROSITE" id="PS01127">
    <property type="entry name" value="EF_TS_2"/>
    <property type="match status" value="1"/>
</dbReference>
<comment type="function">
    <text evidence="1">Associates with the EF-Tu.GDP complex and induces the exchange of GDP to GTP. It remains bound to the aminoacyl-tRNA.EF-Tu.GTP complex up to the GTP hydrolysis stage on the ribosome.</text>
</comment>
<comment type="subcellular location">
    <subcellularLocation>
        <location evidence="1">Cytoplasm</location>
    </subcellularLocation>
</comment>
<comment type="similarity">
    <text evidence="1">Belongs to the EF-Ts family.</text>
</comment>
<accession>C0ZY16</accession>
<protein>
    <recommendedName>
        <fullName evidence="1">Elongation factor Ts</fullName>
        <shortName evidence="1">EF-Ts</shortName>
    </recommendedName>
</protein>
<reference key="1">
    <citation type="submission" date="2005-03" db="EMBL/GenBank/DDBJ databases">
        <title>Comparison of the complete genome sequences of Rhodococcus erythropolis PR4 and Rhodococcus opacus B4.</title>
        <authorList>
            <person name="Takarada H."/>
            <person name="Sekine M."/>
            <person name="Hosoyama A."/>
            <person name="Yamada R."/>
            <person name="Fujisawa T."/>
            <person name="Omata S."/>
            <person name="Shimizu A."/>
            <person name="Tsukatani N."/>
            <person name="Tanikawa S."/>
            <person name="Fujita N."/>
            <person name="Harayama S."/>
        </authorList>
    </citation>
    <scope>NUCLEOTIDE SEQUENCE [LARGE SCALE GENOMIC DNA]</scope>
    <source>
        <strain>PR4 / NBRC 100887</strain>
    </source>
</reference>
<evidence type="ECO:0000255" key="1">
    <source>
        <dbReference type="HAMAP-Rule" id="MF_00050"/>
    </source>
</evidence>
<feature type="chain" id="PRO_1000202250" description="Elongation factor Ts">
    <location>
        <begin position="1"/>
        <end position="275"/>
    </location>
</feature>
<feature type="region of interest" description="Involved in Mg(2+) ion dislocation from EF-Tu" evidence="1">
    <location>
        <begin position="76"/>
        <end position="79"/>
    </location>
</feature>
<gene>
    <name evidence="1" type="primary">tsf</name>
    <name type="ordered locus">RER_25430</name>
</gene>
<proteinExistence type="inferred from homology"/>
<name>EFTS_RHOE4</name>
<keyword id="KW-0963">Cytoplasm</keyword>
<keyword id="KW-0251">Elongation factor</keyword>
<keyword id="KW-0648">Protein biosynthesis</keyword>
<sequence>MANYTAADVKRLRELTGSGMMACKNALADADGDFDKAVEQLRIKGAKDVGKRAERTTAEGLVVAKDGVMIEINCETDFVAKNDEFIKLADEIVTVAAAGKPADLDALKALELDGKTIDTVIAEQSAKIGEKLELSRVASFDGPVAVYLHKRSSDLPPAVGVLIEYTGEGDAAAEAARGAAMQVAALKAKYVTRDEVPAEIVASERHIAEETARAEGKPEQALPKIIEGRVNGFFKDVVLTEQSSVTDSKKTVKAILDEAGVTIKRFVRFEVGASA</sequence>